<organism>
    <name type="scientific">Shouchella clausii (strain KSM-K16)</name>
    <name type="common">Alkalihalobacillus clausii</name>
    <dbReference type="NCBI Taxonomy" id="66692"/>
    <lineage>
        <taxon>Bacteria</taxon>
        <taxon>Bacillati</taxon>
        <taxon>Bacillota</taxon>
        <taxon>Bacilli</taxon>
        <taxon>Bacillales</taxon>
        <taxon>Bacillaceae</taxon>
        <taxon>Shouchella</taxon>
    </lineage>
</organism>
<comment type="subcellular location">
    <subcellularLocation>
        <location evidence="1">Cell membrane</location>
        <topology evidence="1">Multi-pass membrane protein</topology>
    </subcellularLocation>
</comment>
<comment type="similarity">
    <text evidence="1">Belongs to the UPF0756 family.</text>
</comment>
<protein>
    <recommendedName>
        <fullName evidence="1">UPF0756 membrane protein ABC2716</fullName>
    </recommendedName>
</protein>
<feature type="chain" id="PRO_0000388830" description="UPF0756 membrane protein ABC2716">
    <location>
        <begin position="1"/>
        <end position="157"/>
    </location>
</feature>
<feature type="transmembrane region" description="Helical" evidence="1">
    <location>
        <begin position="8"/>
        <end position="28"/>
    </location>
</feature>
<feature type="transmembrane region" description="Helical" evidence="1">
    <location>
        <begin position="54"/>
        <end position="74"/>
    </location>
</feature>
<feature type="transmembrane region" description="Helical" evidence="1">
    <location>
        <begin position="84"/>
        <end position="104"/>
    </location>
</feature>
<feature type="transmembrane region" description="Helical" evidence="1">
    <location>
        <begin position="117"/>
        <end position="137"/>
    </location>
</feature>
<name>Y2716_SHOC1</name>
<dbReference type="EMBL" id="AP006627">
    <property type="protein sequence ID" value="BAD65251.1"/>
    <property type="molecule type" value="Genomic_DNA"/>
</dbReference>
<dbReference type="RefSeq" id="WP_011247559.1">
    <property type="nucleotide sequence ID" value="NC_006582.1"/>
</dbReference>
<dbReference type="SMR" id="Q5WEF9"/>
<dbReference type="STRING" id="66692.ABC2716"/>
<dbReference type="KEGG" id="bcl:ABC2716"/>
<dbReference type="eggNOG" id="COG2707">
    <property type="taxonomic scope" value="Bacteria"/>
</dbReference>
<dbReference type="HOGENOM" id="CLU_125889_1_0_9"/>
<dbReference type="OrthoDB" id="80306at2"/>
<dbReference type="Proteomes" id="UP000001168">
    <property type="component" value="Chromosome"/>
</dbReference>
<dbReference type="GO" id="GO:0005886">
    <property type="term" value="C:plasma membrane"/>
    <property type="evidence" value="ECO:0007669"/>
    <property type="project" value="UniProtKB-SubCell"/>
</dbReference>
<dbReference type="HAMAP" id="MF_01874">
    <property type="entry name" value="UPF0756"/>
    <property type="match status" value="1"/>
</dbReference>
<dbReference type="InterPro" id="IPR007382">
    <property type="entry name" value="UPF0756_TM"/>
</dbReference>
<dbReference type="PANTHER" id="PTHR38452">
    <property type="entry name" value="UPF0756 MEMBRANE PROTEIN YEAL"/>
    <property type="match status" value="1"/>
</dbReference>
<dbReference type="PANTHER" id="PTHR38452:SF1">
    <property type="entry name" value="UPF0756 MEMBRANE PROTEIN YEAL"/>
    <property type="match status" value="1"/>
</dbReference>
<dbReference type="Pfam" id="PF04284">
    <property type="entry name" value="DUF441"/>
    <property type="match status" value="1"/>
</dbReference>
<proteinExistence type="inferred from homology"/>
<gene>
    <name type="ordered locus">ABC2716</name>
</gene>
<evidence type="ECO:0000255" key="1">
    <source>
        <dbReference type="HAMAP-Rule" id="MF_01874"/>
    </source>
</evidence>
<keyword id="KW-1003">Cell membrane</keyword>
<keyword id="KW-0472">Membrane</keyword>
<keyword id="KW-1185">Reference proteome</keyword>
<keyword id="KW-0812">Transmembrane</keyword>
<keyword id="KW-1133">Transmembrane helix</keyword>
<reference key="1">
    <citation type="submission" date="2003-10" db="EMBL/GenBank/DDBJ databases">
        <title>The complete genome sequence of the alkaliphilic Bacillus clausii KSM-K16.</title>
        <authorList>
            <person name="Takaki Y."/>
            <person name="Kageyama Y."/>
            <person name="Shimamura S."/>
            <person name="Suzuki H."/>
            <person name="Nishi S."/>
            <person name="Hatada Y."/>
            <person name="Kawai S."/>
            <person name="Ito S."/>
            <person name="Horikoshi K."/>
        </authorList>
    </citation>
    <scope>NUCLEOTIDE SEQUENCE [LARGE SCALE GENOMIC DNA]</scope>
    <source>
        <strain>KSM-K16</strain>
    </source>
</reference>
<sequence length="157" mass="16264">MLSQSTLFLLLLMAIALIAKNQSLIIAISVLLLIKWTGLGDKVFPLMQAKGINLGVTIITIAVLVPIATGDIGFKQLGEATKSLYAWVALGSGIAVALVAASGIDLLKNDPHITAALVLGTIVAVSFLNGVAVGPLIGAGIAYLTMRAIQYIAQLWG</sequence>
<accession>Q5WEF9</accession>